<feature type="chain" id="PRO_1000070403" description="Erythronate-4-phosphate dehydrogenase">
    <location>
        <begin position="1"/>
        <end position="380"/>
    </location>
</feature>
<feature type="active site" evidence="1">
    <location>
        <position position="208"/>
    </location>
</feature>
<feature type="active site" evidence="1">
    <location>
        <position position="237"/>
    </location>
</feature>
<feature type="active site" description="Proton donor" evidence="1">
    <location>
        <position position="254"/>
    </location>
</feature>
<feature type="binding site" evidence="1">
    <location>
        <position position="45"/>
    </location>
    <ligand>
        <name>substrate</name>
    </ligand>
</feature>
<feature type="binding site" evidence="1">
    <location>
        <position position="66"/>
    </location>
    <ligand>
        <name>substrate</name>
    </ligand>
</feature>
<feature type="binding site" evidence="1">
    <location>
        <begin position="126"/>
        <end position="127"/>
    </location>
    <ligand>
        <name>NAD(+)</name>
        <dbReference type="ChEBI" id="CHEBI:57540"/>
    </ligand>
</feature>
<feature type="binding site" evidence="1">
    <location>
        <position position="146"/>
    </location>
    <ligand>
        <name>NAD(+)</name>
        <dbReference type="ChEBI" id="CHEBI:57540"/>
    </ligand>
</feature>
<feature type="binding site" evidence="1">
    <location>
        <position position="175"/>
    </location>
    <ligand>
        <name>NAD(+)</name>
        <dbReference type="ChEBI" id="CHEBI:57540"/>
    </ligand>
</feature>
<feature type="binding site" evidence="1">
    <location>
        <begin position="206"/>
        <end position="208"/>
    </location>
    <ligand>
        <name>NAD(+)</name>
        <dbReference type="ChEBI" id="CHEBI:57540"/>
    </ligand>
</feature>
<feature type="binding site" evidence="1">
    <location>
        <position position="232"/>
    </location>
    <ligand>
        <name>NAD(+)</name>
        <dbReference type="ChEBI" id="CHEBI:57540"/>
    </ligand>
</feature>
<feature type="binding site" evidence="1">
    <location>
        <position position="257"/>
    </location>
    <ligand>
        <name>NAD(+)</name>
        <dbReference type="ChEBI" id="CHEBI:57540"/>
    </ligand>
</feature>
<feature type="binding site" evidence="1">
    <location>
        <position position="258"/>
    </location>
    <ligand>
        <name>substrate</name>
    </ligand>
</feature>
<sequence>MRILADENIPLVDAFFADQGSIRRLPGRAIDRAALAEVDVLLVRSVTEVSRAALAGSPVRFVGTCTIGTDHLDLDYFAEAGIAWSSAPGCNARGVVDYVLGCLLAMAEVRGADLAERTYGVVGAGQVGGRLVEVLRGLGWKVLVCDPPRQAREPDGEFVSLERLLAEADVISLHTPLNRDGEHPTRHLLDEPRLAALRPGTWLVNASRGAVVDNQALRRLLEGGADLEVALDVWEGEPQADPELAARCLIATPHIAGYSLEGKLRGTAQIYQAYCAWRGIAERVSLQDVLPETWLAGLQLNPGCDPAWALATLCRAVYDPRSDDAAFRRSLTGDSATRRAAFDALRKHYPPRREITGLRVATGGQAELQRVVRALGAQLV</sequence>
<name>PDXB_PSEP7</name>
<accession>A6V8H9</accession>
<comment type="function">
    <text evidence="1">Catalyzes the oxidation of erythronate-4-phosphate to 3-hydroxy-2-oxo-4-phosphonooxybutanoate.</text>
</comment>
<comment type="catalytic activity">
    <reaction evidence="1">
        <text>4-phospho-D-erythronate + NAD(+) = (R)-3-hydroxy-2-oxo-4-phosphooxybutanoate + NADH + H(+)</text>
        <dbReference type="Rhea" id="RHEA:18829"/>
        <dbReference type="ChEBI" id="CHEBI:15378"/>
        <dbReference type="ChEBI" id="CHEBI:57540"/>
        <dbReference type="ChEBI" id="CHEBI:57945"/>
        <dbReference type="ChEBI" id="CHEBI:58538"/>
        <dbReference type="ChEBI" id="CHEBI:58766"/>
        <dbReference type="EC" id="1.1.1.290"/>
    </reaction>
</comment>
<comment type="pathway">
    <text evidence="1">Cofactor biosynthesis; pyridoxine 5'-phosphate biosynthesis; pyridoxine 5'-phosphate from D-erythrose 4-phosphate: step 2/5.</text>
</comment>
<comment type="subunit">
    <text evidence="1">Homodimer.</text>
</comment>
<comment type="subcellular location">
    <subcellularLocation>
        <location evidence="1">Cytoplasm</location>
    </subcellularLocation>
</comment>
<comment type="similarity">
    <text evidence="1">Belongs to the D-isomer specific 2-hydroxyacid dehydrogenase family. PdxB subfamily.</text>
</comment>
<reference key="1">
    <citation type="submission" date="2007-06" db="EMBL/GenBank/DDBJ databases">
        <authorList>
            <person name="Dodson R.J."/>
            <person name="Harkins D."/>
            <person name="Paulsen I.T."/>
        </authorList>
    </citation>
    <scope>NUCLEOTIDE SEQUENCE [LARGE SCALE GENOMIC DNA]</scope>
    <source>
        <strain>DSM 24068 / PA7</strain>
    </source>
</reference>
<organism>
    <name type="scientific">Pseudomonas paraeruginosa (strain DSM 24068 / PA7)</name>
    <name type="common">Pseudomonas aeruginosa (strain PA7)</name>
    <dbReference type="NCBI Taxonomy" id="381754"/>
    <lineage>
        <taxon>Bacteria</taxon>
        <taxon>Pseudomonadati</taxon>
        <taxon>Pseudomonadota</taxon>
        <taxon>Gammaproteobacteria</taxon>
        <taxon>Pseudomonadales</taxon>
        <taxon>Pseudomonadaceae</taxon>
        <taxon>Pseudomonas</taxon>
        <taxon>Pseudomonas paraeruginosa</taxon>
    </lineage>
</organism>
<proteinExistence type="inferred from homology"/>
<gene>
    <name evidence="1" type="primary">pdxB</name>
    <name type="ordered locus">PSPA7_4010</name>
</gene>
<evidence type="ECO:0000255" key="1">
    <source>
        <dbReference type="HAMAP-Rule" id="MF_01825"/>
    </source>
</evidence>
<keyword id="KW-0963">Cytoplasm</keyword>
<keyword id="KW-0520">NAD</keyword>
<keyword id="KW-0560">Oxidoreductase</keyword>
<keyword id="KW-0664">Pyridoxine biosynthesis</keyword>
<dbReference type="EC" id="1.1.1.290" evidence="1"/>
<dbReference type="EMBL" id="CP000744">
    <property type="protein sequence ID" value="ABR86869.1"/>
    <property type="molecule type" value="Genomic_DNA"/>
</dbReference>
<dbReference type="RefSeq" id="WP_012076517.1">
    <property type="nucleotide sequence ID" value="NC_009656.1"/>
</dbReference>
<dbReference type="SMR" id="A6V8H9"/>
<dbReference type="GeneID" id="77222053"/>
<dbReference type="KEGG" id="pap:PSPA7_4010"/>
<dbReference type="HOGENOM" id="CLU_019796_4_0_6"/>
<dbReference type="UniPathway" id="UPA00244">
    <property type="reaction ID" value="UER00310"/>
</dbReference>
<dbReference type="Proteomes" id="UP000001582">
    <property type="component" value="Chromosome"/>
</dbReference>
<dbReference type="GO" id="GO:0005829">
    <property type="term" value="C:cytosol"/>
    <property type="evidence" value="ECO:0007669"/>
    <property type="project" value="TreeGrafter"/>
</dbReference>
<dbReference type="GO" id="GO:0033711">
    <property type="term" value="F:4-phosphoerythronate dehydrogenase activity"/>
    <property type="evidence" value="ECO:0007669"/>
    <property type="project" value="UniProtKB-EC"/>
</dbReference>
<dbReference type="GO" id="GO:0051287">
    <property type="term" value="F:NAD binding"/>
    <property type="evidence" value="ECO:0007669"/>
    <property type="project" value="InterPro"/>
</dbReference>
<dbReference type="GO" id="GO:0046983">
    <property type="term" value="F:protein dimerization activity"/>
    <property type="evidence" value="ECO:0007669"/>
    <property type="project" value="InterPro"/>
</dbReference>
<dbReference type="GO" id="GO:0036001">
    <property type="term" value="P:'de novo' pyridoxal 5'-phosphate biosynthetic process"/>
    <property type="evidence" value="ECO:0007669"/>
    <property type="project" value="TreeGrafter"/>
</dbReference>
<dbReference type="GO" id="GO:0008615">
    <property type="term" value="P:pyridoxine biosynthetic process"/>
    <property type="evidence" value="ECO:0007669"/>
    <property type="project" value="UniProtKB-UniRule"/>
</dbReference>
<dbReference type="CDD" id="cd12158">
    <property type="entry name" value="ErythrP_dh"/>
    <property type="match status" value="1"/>
</dbReference>
<dbReference type="FunFam" id="3.40.50.720:FF:000093">
    <property type="entry name" value="Erythronate-4-phosphate dehydrogenase"/>
    <property type="match status" value="1"/>
</dbReference>
<dbReference type="Gene3D" id="3.30.1370.170">
    <property type="match status" value="1"/>
</dbReference>
<dbReference type="Gene3D" id="3.40.50.720">
    <property type="entry name" value="NAD(P)-binding Rossmann-like Domain"/>
    <property type="match status" value="2"/>
</dbReference>
<dbReference type="HAMAP" id="MF_01825">
    <property type="entry name" value="PdxB"/>
    <property type="match status" value="1"/>
</dbReference>
<dbReference type="InterPro" id="IPR006139">
    <property type="entry name" value="D-isomer_2_OHA_DH_cat_dom"/>
</dbReference>
<dbReference type="InterPro" id="IPR029753">
    <property type="entry name" value="D-isomer_DH_CS"/>
</dbReference>
<dbReference type="InterPro" id="IPR006140">
    <property type="entry name" value="D-isomer_DH_NAD-bd"/>
</dbReference>
<dbReference type="InterPro" id="IPR020921">
    <property type="entry name" value="Erythronate-4-P_DHase"/>
</dbReference>
<dbReference type="InterPro" id="IPR024531">
    <property type="entry name" value="Erythronate-4-P_DHase_dimer"/>
</dbReference>
<dbReference type="InterPro" id="IPR036291">
    <property type="entry name" value="NAD(P)-bd_dom_sf"/>
</dbReference>
<dbReference type="InterPro" id="IPR038251">
    <property type="entry name" value="PdxB_dimer_sf"/>
</dbReference>
<dbReference type="NCBIfam" id="NF001309">
    <property type="entry name" value="PRK00257.1"/>
    <property type="match status" value="1"/>
</dbReference>
<dbReference type="PANTHER" id="PTHR42938">
    <property type="entry name" value="FORMATE DEHYDROGENASE 1"/>
    <property type="match status" value="1"/>
</dbReference>
<dbReference type="PANTHER" id="PTHR42938:SF9">
    <property type="entry name" value="FORMATE DEHYDROGENASE 1"/>
    <property type="match status" value="1"/>
</dbReference>
<dbReference type="Pfam" id="PF00389">
    <property type="entry name" value="2-Hacid_dh"/>
    <property type="match status" value="1"/>
</dbReference>
<dbReference type="Pfam" id="PF02826">
    <property type="entry name" value="2-Hacid_dh_C"/>
    <property type="match status" value="1"/>
</dbReference>
<dbReference type="Pfam" id="PF11890">
    <property type="entry name" value="DUF3410"/>
    <property type="match status" value="1"/>
</dbReference>
<dbReference type="SUPFAM" id="SSF52283">
    <property type="entry name" value="Formate/glycerate dehydrogenase catalytic domain-like"/>
    <property type="match status" value="1"/>
</dbReference>
<dbReference type="SUPFAM" id="SSF51735">
    <property type="entry name" value="NAD(P)-binding Rossmann-fold domains"/>
    <property type="match status" value="1"/>
</dbReference>
<dbReference type="PROSITE" id="PS00671">
    <property type="entry name" value="D_2_HYDROXYACID_DH_3"/>
    <property type="match status" value="1"/>
</dbReference>
<protein>
    <recommendedName>
        <fullName evidence="1">Erythronate-4-phosphate dehydrogenase</fullName>
        <ecNumber evidence="1">1.1.1.290</ecNumber>
    </recommendedName>
</protein>